<comment type="function">
    <text evidence="2">Cleaved by the protease thrombin to yield monomers which, together with fibrinogen alpha (FGA) and fibrinogen gamma (FGG), polymerize to form an insoluble fibrin matrix. Fibrin has a major function in hemostasis as one of the primary components of blood clots.</text>
</comment>
<comment type="subunit">
    <text evidence="6 7">Heterohexamer; disulfide linked. Contains 2 sets of 3 non-identical chains (alpha, beta and gamma). The 2 heterotrimers are in head to head conformation with the N-termini in a small central domain.</text>
</comment>
<comment type="subcellular location">
    <subcellularLocation>
        <location evidence="6 7">Secreted</location>
    </subcellularLocation>
</comment>
<comment type="domain">
    <text evidence="6 7">A long coiled coil structure formed by 3 polypeptide chains connects the central nodule to the C-terminal domains (distal nodules). The long C-terminal ends of the alpha chains fold back, contributing a fourth strand to the coiled coil structure.</text>
</comment>
<comment type="PTM">
    <text>Conversion of fibrinogen to fibrin is triggered by thrombin, which cleaves fibrinopeptides A and B from alpha and beta chains, and thus exposes the N-terminal polymerization sites responsible for the formation of the soft clot. The soft clot is converted into the hard clot by factor XIIIA which catalyzes the epsilon-(gamma-glutamyl)lysine cross-linking between gamma chains (stronger) and between alpha chains (weaker) of different monomers.</text>
</comment>
<organism>
    <name type="scientific">Gallus gallus</name>
    <name type="common">Chicken</name>
    <dbReference type="NCBI Taxonomy" id="9031"/>
    <lineage>
        <taxon>Eukaryota</taxon>
        <taxon>Metazoa</taxon>
        <taxon>Chordata</taxon>
        <taxon>Craniata</taxon>
        <taxon>Vertebrata</taxon>
        <taxon>Euteleostomi</taxon>
        <taxon>Archelosauria</taxon>
        <taxon>Archosauria</taxon>
        <taxon>Dinosauria</taxon>
        <taxon>Saurischia</taxon>
        <taxon>Theropoda</taxon>
        <taxon>Coelurosauria</taxon>
        <taxon>Aves</taxon>
        <taxon>Neognathae</taxon>
        <taxon>Galloanserae</taxon>
        <taxon>Galliformes</taxon>
        <taxon>Phasianidae</taxon>
        <taxon>Phasianinae</taxon>
        <taxon>Gallus</taxon>
    </lineage>
</organism>
<name>FIBB_CHICK</name>
<reference key="1">
    <citation type="journal article" date="1991" name="Biochemistry">
        <title>The beta chain of chicken fibrinogen contains an atypical thrombin cleavage site.</title>
        <authorList>
            <person name="Weissbach L."/>
            <person name="Oddoux C."/>
            <person name="Procyk R."/>
            <person name="Grieninger G."/>
        </authorList>
    </citation>
    <scope>NUCLEOTIDE SEQUENCE [MRNA]</scope>
    <scope>PROTEIN SEQUENCE OF 1-13 AND 18-39</scope>
</reference>
<reference key="2">
    <citation type="journal article" date="2000" name="Proc. Natl. Acad. Sci. U.S.A.">
        <title>Crystal structure of native chicken fibrinogen at 5.5-A resolution.</title>
        <authorList>
            <person name="Yang Z."/>
            <person name="Mochalkin I."/>
            <person name="Veerapandian L."/>
            <person name="Riley M."/>
            <person name="Doolittle R.F."/>
        </authorList>
    </citation>
    <scope>X-RAY CRYSTALLOGRAPHY (5.5 ANGSTROMS)</scope>
    <scope>SUBUNIT</scope>
    <scope>SUBCELLULAR LOCATION</scope>
    <scope>COILED COIL DOMAIN</scope>
</reference>
<reference evidence="9" key="3">
    <citation type="journal article" date="2001" name="Biochemistry">
        <title>Crystal structure of native chicken fibrinogen at 2.7 A resolution.</title>
        <authorList>
            <person name="Yang Z."/>
            <person name="Kollman J.M."/>
            <person name="Pandi L."/>
            <person name="Doolittle R.F."/>
        </authorList>
    </citation>
    <scope>X-RAY CRYSTALLOGRAPHY (2.70 ANGSTROMS) IN COMPLEX WITH CALCIUM</scope>
    <scope>DISULFIDE BONDS</scope>
    <scope>SUBCELLULAR LOCATION</scope>
    <scope>SUBUNIT</scope>
    <scope>COILED COIL DOMAIN</scope>
    <scope>GLYCOSYLATION AT ASN-367</scope>
</reference>
<protein>
    <recommendedName>
        <fullName>Fibrinogen beta chain</fullName>
    </recommendedName>
    <component>
        <recommendedName>
            <fullName>Fibrinopeptide B</fullName>
        </recommendedName>
    </component>
    <component>
        <recommendedName>
            <fullName>Fibrinogen beta chain</fullName>
        </recommendedName>
    </component>
</protein>
<evidence type="ECO:0000250" key="1"/>
<evidence type="ECO:0000250" key="2">
    <source>
        <dbReference type="UniProtKB" id="E9PV24"/>
    </source>
</evidence>
<evidence type="ECO:0000255" key="3"/>
<evidence type="ECO:0000255" key="4">
    <source>
        <dbReference type="PROSITE-ProRule" id="PRU00739"/>
    </source>
</evidence>
<evidence type="ECO:0000256" key="5">
    <source>
        <dbReference type="SAM" id="MobiDB-lite"/>
    </source>
</evidence>
<evidence type="ECO:0000269" key="6">
    <source>
    </source>
</evidence>
<evidence type="ECO:0000269" key="7">
    <source>
    </source>
</evidence>
<evidence type="ECO:0000269" key="8">
    <source>
    </source>
</evidence>
<evidence type="ECO:0007744" key="9">
    <source>
        <dbReference type="PDB" id="1M1J"/>
    </source>
</evidence>
<evidence type="ECO:0007829" key="10">
    <source>
        <dbReference type="PDB" id="1M1J"/>
    </source>
</evidence>
<proteinExistence type="evidence at protein level"/>
<feature type="peptide" id="PRO_0000009093" description="Fibrinopeptide B" evidence="8">
    <location>
        <begin position="1" status="less than"/>
        <end position="17"/>
    </location>
</feature>
<feature type="chain" id="PRO_0000009094" description="Fibrinogen beta chain">
    <location>
        <begin position="18"/>
        <end position="463"/>
    </location>
</feature>
<feature type="domain" description="Fibrinogen C-terminal" evidence="4">
    <location>
        <begin position="206"/>
        <end position="461"/>
    </location>
</feature>
<feature type="region of interest" description="Disordered" evidence="5">
    <location>
        <begin position="1"/>
        <end position="56"/>
    </location>
</feature>
<feature type="compositionally biased region" description="Acidic residues" evidence="5">
    <location>
        <begin position="1"/>
        <end position="12"/>
    </location>
</feature>
<feature type="compositionally biased region" description="Basic and acidic residues" evidence="5">
    <location>
        <begin position="16"/>
        <end position="27"/>
    </location>
</feature>
<feature type="binding site" evidence="7 9">
    <location>
        <position position="384"/>
    </location>
    <ligand>
        <name>Ca(2+)</name>
        <dbReference type="ChEBI" id="CHEBI:29108"/>
    </ligand>
</feature>
<feature type="binding site" evidence="7 9">
    <location>
        <position position="386"/>
    </location>
    <ligand>
        <name>Ca(2+)</name>
        <dbReference type="ChEBI" id="CHEBI:29108"/>
    </ligand>
</feature>
<feature type="binding site" evidence="7 9">
    <location>
        <position position="388"/>
    </location>
    <ligand>
        <name>Ca(2+)</name>
        <dbReference type="ChEBI" id="CHEBI:29108"/>
    </ligand>
</feature>
<feature type="site" description="Cleavage; by thrombin; to release fibrinopeptide B">
    <location>
        <begin position="17"/>
        <end position="18"/>
    </location>
</feature>
<feature type="modified residue" description="Sulfotyrosine" evidence="1">
    <location>
        <position position="5"/>
    </location>
</feature>
<feature type="glycosylation site" description="N-linked (GlcNAc...) asparagine" evidence="3 7">
    <location>
        <position position="367"/>
    </location>
</feature>
<feature type="disulfide bond" description="Interchain (with alpha chain)" evidence="4 7 9">
    <location>
        <position position="69"/>
    </location>
</feature>
<feature type="disulfide bond" description="Interchain (with alpha chain)" evidence="4 7 9">
    <location>
        <position position="80"/>
    </location>
</feature>
<feature type="disulfide bond" description="Interchain (with gamma chain)" evidence="4">
    <location>
        <position position="84"/>
    </location>
</feature>
<feature type="disulfide bond" description="Interchain (with alpha chain)" evidence="4 7 9">
    <location>
        <position position="197"/>
    </location>
</feature>
<feature type="disulfide bond" description="Interchain (with gamma chain)" evidence="4">
    <location>
        <position position="201"/>
    </location>
</feature>
<feature type="disulfide bond" evidence="4 7 9">
    <location>
        <begin position="205"/>
        <end position="289"/>
    </location>
</feature>
<feature type="disulfide bond" evidence="4 7 9">
    <location>
        <begin position="215"/>
        <end position="244"/>
    </location>
</feature>
<feature type="disulfide bond" evidence="4 7 9">
    <location>
        <begin position="397"/>
        <end position="410"/>
    </location>
</feature>
<feature type="non-terminal residue">
    <location>
        <position position="1"/>
    </location>
</feature>
<feature type="turn" evidence="10">
    <location>
        <begin position="74"/>
        <end position="76"/>
    </location>
</feature>
<feature type="strand" evidence="10">
    <location>
        <begin position="78"/>
        <end position="81"/>
    </location>
</feature>
<feature type="helix" evidence="10">
    <location>
        <begin position="85"/>
        <end position="162"/>
    </location>
</feature>
<feature type="helix" evidence="10">
    <location>
        <begin position="164"/>
        <end position="196"/>
    </location>
</feature>
<feature type="strand" evidence="10">
    <location>
        <begin position="207"/>
        <end position="209"/>
    </location>
</feature>
<feature type="strand" evidence="10">
    <location>
        <begin position="212"/>
        <end position="214"/>
    </location>
</feature>
<feature type="helix" evidence="10">
    <location>
        <begin position="215"/>
        <end position="220"/>
    </location>
</feature>
<feature type="strand" evidence="10">
    <location>
        <begin position="227"/>
        <end position="231"/>
    </location>
</feature>
<feature type="strand" evidence="10">
    <location>
        <begin position="240"/>
        <end position="245"/>
    </location>
</feature>
<feature type="helix" evidence="10">
    <location>
        <begin position="248"/>
        <end position="250"/>
    </location>
</feature>
<feature type="strand" evidence="10">
    <location>
        <begin position="253"/>
        <end position="261"/>
    </location>
</feature>
<feature type="helix" evidence="10">
    <location>
        <begin position="270"/>
        <end position="275"/>
    </location>
</feature>
<feature type="strand" evidence="10">
    <location>
        <begin position="284"/>
        <end position="288"/>
    </location>
</feature>
<feature type="strand" evidence="10">
    <location>
        <begin position="294"/>
        <end position="296"/>
    </location>
</feature>
<feature type="helix" evidence="10">
    <location>
        <begin position="299"/>
        <end position="306"/>
    </location>
</feature>
<feature type="strand" evidence="10">
    <location>
        <begin position="311"/>
        <end position="318"/>
    </location>
</feature>
<feature type="strand" evidence="10">
    <location>
        <begin position="320"/>
        <end position="322"/>
    </location>
</feature>
<feature type="strand" evidence="10">
    <location>
        <begin position="324"/>
        <end position="334"/>
    </location>
</feature>
<feature type="helix" evidence="10">
    <location>
        <begin position="337"/>
        <end position="339"/>
    </location>
</feature>
<feature type="strand" evidence="10">
    <location>
        <begin position="343"/>
        <end position="352"/>
    </location>
</feature>
<feature type="helix" evidence="10">
    <location>
        <begin position="355"/>
        <end position="358"/>
    </location>
</feature>
<feature type="helix" evidence="10">
    <location>
        <begin position="366"/>
        <end position="369"/>
    </location>
</feature>
<feature type="helix" evidence="10">
    <location>
        <begin position="397"/>
        <end position="400"/>
    </location>
</feature>
<feature type="strand" evidence="10">
    <location>
        <begin position="408"/>
        <end position="410"/>
    </location>
</feature>
<feature type="strand" evidence="10">
    <location>
        <begin position="412"/>
        <end position="414"/>
    </location>
</feature>
<feature type="helix" evidence="10">
    <location>
        <begin position="427"/>
        <end position="429"/>
    </location>
</feature>
<feature type="strand" evidence="10">
    <location>
        <begin position="437"/>
        <end position="440"/>
    </location>
</feature>
<feature type="helix" evidence="10">
    <location>
        <begin position="441"/>
        <end position="444"/>
    </location>
</feature>
<feature type="strand" evidence="10">
    <location>
        <begin position="446"/>
        <end position="448"/>
    </location>
</feature>
<feature type="strand" evidence="10">
    <location>
        <begin position="451"/>
        <end position="459"/>
    </location>
</feature>
<gene>
    <name type="primary">FGB</name>
</gene>
<keyword id="KW-0002">3D-structure</keyword>
<keyword id="KW-0094">Blood coagulation</keyword>
<keyword id="KW-0106">Calcium</keyword>
<keyword id="KW-0175">Coiled coil</keyword>
<keyword id="KW-0903">Direct protein sequencing</keyword>
<keyword id="KW-1015">Disulfide bond</keyword>
<keyword id="KW-0325">Glycoprotein</keyword>
<keyword id="KW-0356">Hemostasis</keyword>
<keyword id="KW-0479">Metal-binding</keyword>
<keyword id="KW-1185">Reference proteome</keyword>
<keyword id="KW-0964">Secreted</keyword>
<keyword id="KW-0765">Sulfation</keyword>
<accession>Q02020</accession>
<sequence length="463" mass="52678">ASVEYDNEEDSPQIDARAHRPLDKRQEAAPTLRPVAPPISGTGYQPRPPKQDKQAMKKGPIIYPDAGGCKHPLDELGVLCPTGCELQTTLLKQEKTVKPVLRDLKDRVAKFSDTSTTMYQYVNMIDNKLVKTQKQRKDNDIILSEYNTEMELHYNYIKDNLDNNIPSSLRVLRAVIDSLHKKIQKLENAIATQTDYCRSPCVASCNIPVVSGRECEDIYRKGGETSEMYIIQPDPFTTPYRVYCDMETDNGGWTLIQNRQDGSVNFGRAWDEYKRGFGNIAKSGGKKYCDTPGEYWLGNDKISQLTKIGPTKVLIEMEDWNGDKVSALYGGFTIHNEGNKYQLSVSNYKGNAGNALMEGASQLYGENRTMTIHNGMYFSTYDRDNDGWLTTDPRKQCSKEDGGGWWYNRCHAANPNGRYYWGGTYSWDMAKHGTDDGIVWMNWKGSWYSMKKMSMKIKPYFPD</sequence>
<dbReference type="EMBL" id="M58514">
    <property type="protein sequence ID" value="AAA48770.1"/>
    <property type="molecule type" value="mRNA"/>
</dbReference>
<dbReference type="PIR" id="A38463">
    <property type="entry name" value="A38463"/>
</dbReference>
<dbReference type="RefSeq" id="NP_001161155.1">
    <property type="nucleotide sequence ID" value="NM_001167683.1"/>
</dbReference>
<dbReference type="PDB" id="1EI3">
    <property type="method" value="X-ray"/>
    <property type="resolution" value="5.50 A"/>
    <property type="chains" value="B/E=1-463"/>
</dbReference>
<dbReference type="PDB" id="1M1J">
    <property type="method" value="X-ray"/>
    <property type="resolution" value="2.70 A"/>
    <property type="chains" value="B/E=1-463"/>
</dbReference>
<dbReference type="PDBsum" id="1EI3"/>
<dbReference type="PDBsum" id="1M1J"/>
<dbReference type="SMR" id="Q02020"/>
<dbReference type="FunCoup" id="Q02020">
    <property type="interactions" value="985"/>
</dbReference>
<dbReference type="STRING" id="9031.ENSGALP00000038105"/>
<dbReference type="GlyCosmos" id="Q02020">
    <property type="glycosylation" value="1 site, No reported glycans"/>
</dbReference>
<dbReference type="GlyGen" id="Q02020">
    <property type="glycosylation" value="2 sites"/>
</dbReference>
<dbReference type="iPTMnet" id="Q02020"/>
<dbReference type="PaxDb" id="9031-ENSGALP00000015057"/>
<dbReference type="GeneID" id="373926"/>
<dbReference type="KEGG" id="gga:373926"/>
<dbReference type="CTD" id="2244"/>
<dbReference type="VEuPathDB" id="HostDB:geneid_373926"/>
<dbReference type="eggNOG" id="KOG2579">
    <property type="taxonomic scope" value="Eukaryota"/>
</dbReference>
<dbReference type="HOGENOM" id="CLU_038628_13_0_1"/>
<dbReference type="InParanoid" id="Q02020"/>
<dbReference type="OrthoDB" id="9930906at2759"/>
<dbReference type="PhylomeDB" id="Q02020"/>
<dbReference type="EvolutionaryTrace" id="Q02020"/>
<dbReference type="Proteomes" id="UP000000539">
    <property type="component" value="Unassembled WGS sequence"/>
</dbReference>
<dbReference type="GO" id="GO:0062023">
    <property type="term" value="C:collagen-containing extracellular matrix"/>
    <property type="evidence" value="ECO:0000318"/>
    <property type="project" value="GO_Central"/>
</dbReference>
<dbReference type="GO" id="GO:0005615">
    <property type="term" value="C:extracellular space"/>
    <property type="evidence" value="ECO:0000318"/>
    <property type="project" value="GO_Central"/>
</dbReference>
<dbReference type="GO" id="GO:0005577">
    <property type="term" value="C:fibrinogen complex"/>
    <property type="evidence" value="ECO:0000314"/>
    <property type="project" value="CAFA"/>
</dbReference>
<dbReference type="GO" id="GO:0046872">
    <property type="term" value="F:metal ion binding"/>
    <property type="evidence" value="ECO:0007669"/>
    <property type="project" value="UniProtKB-KW"/>
</dbReference>
<dbReference type="GO" id="GO:0030674">
    <property type="term" value="F:protein-macromolecule adaptor activity"/>
    <property type="evidence" value="ECO:0000353"/>
    <property type="project" value="CAFA"/>
</dbReference>
<dbReference type="GO" id="GO:0005102">
    <property type="term" value="F:signaling receptor binding"/>
    <property type="evidence" value="ECO:0007669"/>
    <property type="project" value="InterPro"/>
</dbReference>
<dbReference type="GO" id="GO:0072378">
    <property type="term" value="P:blood coagulation, fibrin clot formation"/>
    <property type="evidence" value="ECO:0000318"/>
    <property type="project" value="GO_Central"/>
</dbReference>
<dbReference type="GO" id="GO:0007160">
    <property type="term" value="P:cell-matrix adhesion"/>
    <property type="evidence" value="ECO:0000318"/>
    <property type="project" value="GO_Central"/>
</dbReference>
<dbReference type="GO" id="GO:0070527">
    <property type="term" value="P:platelet aggregation"/>
    <property type="evidence" value="ECO:0000318"/>
    <property type="project" value="GO_Central"/>
</dbReference>
<dbReference type="GO" id="GO:0051258">
    <property type="term" value="P:protein polymerization"/>
    <property type="evidence" value="ECO:0007669"/>
    <property type="project" value="InterPro"/>
</dbReference>
<dbReference type="CDD" id="cd00087">
    <property type="entry name" value="FReD"/>
    <property type="match status" value="1"/>
</dbReference>
<dbReference type="FunFam" id="1.20.5.50:FF:000002">
    <property type="entry name" value="Fibrinogen beta chain"/>
    <property type="match status" value="1"/>
</dbReference>
<dbReference type="FunFam" id="3.90.215.10:FF:000006">
    <property type="entry name" value="Fibrinogen beta chain"/>
    <property type="match status" value="1"/>
</dbReference>
<dbReference type="FunFam" id="4.10.530.10:FF:000004">
    <property type="entry name" value="Fibrinogen beta chain"/>
    <property type="match status" value="1"/>
</dbReference>
<dbReference type="Gene3D" id="1.20.5.50">
    <property type="match status" value="2"/>
</dbReference>
<dbReference type="Gene3D" id="3.90.215.10">
    <property type="entry name" value="Gamma Fibrinogen, chain A, domain 1"/>
    <property type="match status" value="1"/>
</dbReference>
<dbReference type="InterPro" id="IPR037579">
    <property type="entry name" value="FIB_ANG-like"/>
</dbReference>
<dbReference type="InterPro" id="IPR036056">
    <property type="entry name" value="Fibrinogen-like_C"/>
</dbReference>
<dbReference type="InterPro" id="IPR014716">
    <property type="entry name" value="Fibrinogen_a/b/g_C_1"/>
</dbReference>
<dbReference type="InterPro" id="IPR002181">
    <property type="entry name" value="Fibrinogen_a/b/g_C_dom"/>
</dbReference>
<dbReference type="InterPro" id="IPR012290">
    <property type="entry name" value="Fibrinogen_a/b/g_coil_dom"/>
</dbReference>
<dbReference type="InterPro" id="IPR020837">
    <property type="entry name" value="Fibrinogen_CS"/>
</dbReference>
<dbReference type="NCBIfam" id="NF040941">
    <property type="entry name" value="GGGWT_bact"/>
    <property type="match status" value="1"/>
</dbReference>
<dbReference type="PANTHER" id="PTHR47221">
    <property type="entry name" value="FIBRINOGEN ALPHA CHAIN"/>
    <property type="match status" value="1"/>
</dbReference>
<dbReference type="PANTHER" id="PTHR47221:SF5">
    <property type="entry name" value="FIBRINOGEN C-TERMINAL DOMAIN-CONTAINING PROTEIN"/>
    <property type="match status" value="1"/>
</dbReference>
<dbReference type="Pfam" id="PF08702">
    <property type="entry name" value="Fib_alpha"/>
    <property type="match status" value="1"/>
</dbReference>
<dbReference type="Pfam" id="PF00147">
    <property type="entry name" value="Fibrinogen_C"/>
    <property type="match status" value="1"/>
</dbReference>
<dbReference type="SMART" id="SM00186">
    <property type="entry name" value="FBG"/>
    <property type="match status" value="1"/>
</dbReference>
<dbReference type="SMART" id="SM01212">
    <property type="entry name" value="Fib_alpha"/>
    <property type="match status" value="1"/>
</dbReference>
<dbReference type="SUPFAM" id="SSF56496">
    <property type="entry name" value="Fibrinogen C-terminal domain-like"/>
    <property type="match status" value="1"/>
</dbReference>
<dbReference type="SUPFAM" id="SSF58010">
    <property type="entry name" value="Fibrinogen coiled-coil and central regions"/>
    <property type="match status" value="1"/>
</dbReference>
<dbReference type="PROSITE" id="PS00514">
    <property type="entry name" value="FIBRINOGEN_C_1"/>
    <property type="match status" value="1"/>
</dbReference>
<dbReference type="PROSITE" id="PS51406">
    <property type="entry name" value="FIBRINOGEN_C_2"/>
    <property type="match status" value="1"/>
</dbReference>